<keyword id="KW-0001">2Fe-2S</keyword>
<keyword id="KW-0004">4Fe-4S</keyword>
<keyword id="KW-0093">Biotin biosynthesis</keyword>
<keyword id="KW-0408">Iron</keyword>
<keyword id="KW-0411">Iron-sulfur</keyword>
<keyword id="KW-0479">Metal-binding</keyword>
<keyword id="KW-1185">Reference proteome</keyword>
<keyword id="KW-0949">S-adenosyl-L-methionine</keyword>
<keyword id="KW-0808">Transferase</keyword>
<name>BIOB_STRAW</name>
<organism>
    <name type="scientific">Streptomyces avermitilis (strain ATCC 31267 / DSM 46492 / JCM 5070 / NBRC 14893 / NCIMB 12804 / NRRL 8165 / MA-4680)</name>
    <dbReference type="NCBI Taxonomy" id="227882"/>
    <lineage>
        <taxon>Bacteria</taxon>
        <taxon>Bacillati</taxon>
        <taxon>Actinomycetota</taxon>
        <taxon>Actinomycetes</taxon>
        <taxon>Kitasatosporales</taxon>
        <taxon>Streptomycetaceae</taxon>
        <taxon>Streptomyces</taxon>
    </lineage>
</organism>
<reference key="1">
    <citation type="journal article" date="2001" name="Proc. Natl. Acad. Sci. U.S.A.">
        <title>Genome sequence of an industrial microorganism Streptomyces avermitilis: deducing the ability of producing secondary metabolites.</title>
        <authorList>
            <person name="Omura S."/>
            <person name="Ikeda H."/>
            <person name="Ishikawa J."/>
            <person name="Hanamoto A."/>
            <person name="Takahashi C."/>
            <person name="Shinose M."/>
            <person name="Takahashi Y."/>
            <person name="Horikawa H."/>
            <person name="Nakazawa H."/>
            <person name="Osonoe T."/>
            <person name="Kikuchi H."/>
            <person name="Shiba T."/>
            <person name="Sakaki Y."/>
            <person name="Hattori M."/>
        </authorList>
    </citation>
    <scope>NUCLEOTIDE SEQUENCE [LARGE SCALE GENOMIC DNA]</scope>
    <source>
        <strain>ATCC 31267 / DSM 46492 / JCM 5070 / NBRC 14893 / NCIMB 12804 / NRRL 8165 / MA-4680</strain>
    </source>
</reference>
<reference key="2">
    <citation type="journal article" date="2003" name="Nat. Biotechnol.">
        <title>Complete genome sequence and comparative analysis of the industrial microorganism Streptomyces avermitilis.</title>
        <authorList>
            <person name="Ikeda H."/>
            <person name="Ishikawa J."/>
            <person name="Hanamoto A."/>
            <person name="Shinose M."/>
            <person name="Kikuchi H."/>
            <person name="Shiba T."/>
            <person name="Sakaki Y."/>
            <person name="Hattori M."/>
            <person name="Omura S."/>
        </authorList>
    </citation>
    <scope>NUCLEOTIDE SEQUENCE [LARGE SCALE GENOMIC DNA]</scope>
    <source>
        <strain>ATCC 31267 / DSM 46492 / JCM 5070 / NBRC 14893 / NCIMB 12804 / NRRL 8165 / MA-4680</strain>
    </source>
</reference>
<comment type="function">
    <text evidence="1">Catalyzes the conversion of dethiobiotin (DTB) to biotin by the insertion of a sulfur atom into dethiobiotin via a radical-based mechanism.</text>
</comment>
<comment type="catalytic activity">
    <reaction evidence="1">
        <text>(4R,5S)-dethiobiotin + (sulfur carrier)-SH + 2 reduced [2Fe-2S]-[ferredoxin] + 2 S-adenosyl-L-methionine = (sulfur carrier)-H + biotin + 2 5'-deoxyadenosine + 2 L-methionine + 2 oxidized [2Fe-2S]-[ferredoxin]</text>
        <dbReference type="Rhea" id="RHEA:22060"/>
        <dbReference type="Rhea" id="RHEA-COMP:10000"/>
        <dbReference type="Rhea" id="RHEA-COMP:10001"/>
        <dbReference type="Rhea" id="RHEA-COMP:14737"/>
        <dbReference type="Rhea" id="RHEA-COMP:14739"/>
        <dbReference type="ChEBI" id="CHEBI:17319"/>
        <dbReference type="ChEBI" id="CHEBI:29917"/>
        <dbReference type="ChEBI" id="CHEBI:33737"/>
        <dbReference type="ChEBI" id="CHEBI:33738"/>
        <dbReference type="ChEBI" id="CHEBI:57586"/>
        <dbReference type="ChEBI" id="CHEBI:57844"/>
        <dbReference type="ChEBI" id="CHEBI:59789"/>
        <dbReference type="ChEBI" id="CHEBI:64428"/>
        <dbReference type="ChEBI" id="CHEBI:149473"/>
        <dbReference type="EC" id="2.8.1.6"/>
    </reaction>
</comment>
<comment type="cofactor">
    <cofactor evidence="1">
        <name>[4Fe-4S] cluster</name>
        <dbReference type="ChEBI" id="CHEBI:49883"/>
    </cofactor>
    <text evidence="1">Binds 1 [4Fe-4S] cluster. The cluster is coordinated with 3 cysteines and an exchangeable S-adenosyl-L-methionine.</text>
</comment>
<comment type="cofactor">
    <cofactor evidence="1">
        <name>[2Fe-2S] cluster</name>
        <dbReference type="ChEBI" id="CHEBI:190135"/>
    </cofactor>
    <text evidence="1">Binds 1 [2Fe-2S] cluster. The cluster is coordinated with 3 cysteines and 1 arginine.</text>
</comment>
<comment type="pathway">
    <text evidence="1">Cofactor biosynthesis; biotin biosynthesis; biotin from 7,8-diaminononanoate: step 2/2.</text>
</comment>
<comment type="subunit">
    <text evidence="1">Homodimer.</text>
</comment>
<comment type="similarity">
    <text evidence="1">Belongs to the radical SAM superfamily. Biotin synthase family.</text>
</comment>
<accession>Q826T2</accession>
<gene>
    <name evidence="1" type="primary">bioB</name>
    <name type="synonym">sav7093</name>
    <name type="ordered locus">SAV_7093</name>
</gene>
<sequence length="388" mass="41213">MDLLNTLVEKGLRRELPSRAEALAVLATSDDDVLDVVAAAGKVRRHWFGRRVKLNYLVNLKSGLCPEDCSYCSQRLGSKAEILKYTWLKPDEASQAAAAGLAGGAKRVCLVASGRGPTDRDVDRVSDTIKAIKDQNEGVEVCACLGLLSDGQADRLREAGADAYNHNLNTSEGTYGDITTTHTYADRVETVQKAHAAGLSACSGLIAGMGETDEDLVDVVYSLRELDPDSVPVNFLIPFEGTPLAKEWNLTPQRCLRILAMVRFVCPDVEVRIAGGREVHLRTMQPLALHLANSIFLGDYLTSEGQAGKADLEMIADAGFEVEGADQVTLPEHRAPAGGCGSEQSAGCGSHEGGGACGSAPAPRTDEARTDLVAVRRRGAGTDLAPNA</sequence>
<protein>
    <recommendedName>
        <fullName evidence="1">Biotin synthase</fullName>
        <ecNumber evidence="1">2.8.1.6</ecNumber>
    </recommendedName>
</protein>
<evidence type="ECO:0000255" key="1">
    <source>
        <dbReference type="HAMAP-Rule" id="MF_01694"/>
    </source>
</evidence>
<evidence type="ECO:0000255" key="2">
    <source>
        <dbReference type="PROSITE-ProRule" id="PRU01266"/>
    </source>
</evidence>
<evidence type="ECO:0000256" key="3">
    <source>
        <dbReference type="SAM" id="MobiDB-lite"/>
    </source>
</evidence>
<proteinExistence type="inferred from homology"/>
<feature type="chain" id="PRO_0000381663" description="Biotin synthase">
    <location>
        <begin position="1"/>
        <end position="388"/>
    </location>
</feature>
<feature type="domain" description="Radical SAM core" evidence="2">
    <location>
        <begin position="47"/>
        <end position="277"/>
    </location>
</feature>
<feature type="region of interest" description="Disordered" evidence="3">
    <location>
        <begin position="335"/>
        <end position="371"/>
    </location>
</feature>
<feature type="binding site" evidence="1">
    <location>
        <position position="65"/>
    </location>
    <ligand>
        <name>[4Fe-4S] cluster</name>
        <dbReference type="ChEBI" id="CHEBI:49883"/>
        <note>4Fe-4S-S-AdoMet</note>
    </ligand>
</feature>
<feature type="binding site" evidence="1">
    <location>
        <position position="69"/>
    </location>
    <ligand>
        <name>[4Fe-4S] cluster</name>
        <dbReference type="ChEBI" id="CHEBI:49883"/>
        <note>4Fe-4S-S-AdoMet</note>
    </ligand>
</feature>
<feature type="binding site" evidence="1">
    <location>
        <position position="72"/>
    </location>
    <ligand>
        <name>[4Fe-4S] cluster</name>
        <dbReference type="ChEBI" id="CHEBI:49883"/>
        <note>4Fe-4S-S-AdoMet</note>
    </ligand>
</feature>
<feature type="binding site" evidence="1">
    <location>
        <position position="109"/>
    </location>
    <ligand>
        <name>[2Fe-2S] cluster</name>
        <dbReference type="ChEBI" id="CHEBI:190135"/>
    </ligand>
</feature>
<feature type="binding site" evidence="1">
    <location>
        <position position="142"/>
    </location>
    <ligand>
        <name>[2Fe-2S] cluster</name>
        <dbReference type="ChEBI" id="CHEBI:190135"/>
    </ligand>
</feature>
<feature type="binding site" evidence="1">
    <location>
        <position position="202"/>
    </location>
    <ligand>
        <name>[2Fe-2S] cluster</name>
        <dbReference type="ChEBI" id="CHEBI:190135"/>
    </ligand>
</feature>
<feature type="binding site" evidence="1">
    <location>
        <position position="272"/>
    </location>
    <ligand>
        <name>[2Fe-2S] cluster</name>
        <dbReference type="ChEBI" id="CHEBI:190135"/>
    </ligand>
</feature>
<dbReference type="EC" id="2.8.1.6" evidence="1"/>
<dbReference type="EMBL" id="BA000030">
    <property type="protein sequence ID" value="BAC74804.1"/>
    <property type="molecule type" value="Genomic_DNA"/>
</dbReference>
<dbReference type="RefSeq" id="WP_010988488.1">
    <property type="nucleotide sequence ID" value="NZ_JZJK01000085.1"/>
</dbReference>
<dbReference type="SMR" id="Q826T2"/>
<dbReference type="GeneID" id="41544167"/>
<dbReference type="KEGG" id="sma:SAVERM_7093"/>
<dbReference type="eggNOG" id="COG0502">
    <property type="taxonomic scope" value="Bacteria"/>
</dbReference>
<dbReference type="HOGENOM" id="CLU_033172_2_1_11"/>
<dbReference type="OrthoDB" id="9786826at2"/>
<dbReference type="UniPathway" id="UPA00078">
    <property type="reaction ID" value="UER00162"/>
</dbReference>
<dbReference type="Proteomes" id="UP000000428">
    <property type="component" value="Chromosome"/>
</dbReference>
<dbReference type="GO" id="GO:0051537">
    <property type="term" value="F:2 iron, 2 sulfur cluster binding"/>
    <property type="evidence" value="ECO:0007669"/>
    <property type="project" value="UniProtKB-KW"/>
</dbReference>
<dbReference type="GO" id="GO:0051539">
    <property type="term" value="F:4 iron, 4 sulfur cluster binding"/>
    <property type="evidence" value="ECO:0007669"/>
    <property type="project" value="UniProtKB-KW"/>
</dbReference>
<dbReference type="GO" id="GO:0004076">
    <property type="term" value="F:biotin synthase activity"/>
    <property type="evidence" value="ECO:0007669"/>
    <property type="project" value="UniProtKB-UniRule"/>
</dbReference>
<dbReference type="GO" id="GO:0005506">
    <property type="term" value="F:iron ion binding"/>
    <property type="evidence" value="ECO:0007669"/>
    <property type="project" value="UniProtKB-UniRule"/>
</dbReference>
<dbReference type="GO" id="GO:0009102">
    <property type="term" value="P:biotin biosynthetic process"/>
    <property type="evidence" value="ECO:0007669"/>
    <property type="project" value="UniProtKB-UniRule"/>
</dbReference>
<dbReference type="CDD" id="cd01335">
    <property type="entry name" value="Radical_SAM"/>
    <property type="match status" value="1"/>
</dbReference>
<dbReference type="FunFam" id="3.20.20.70:FF:000026">
    <property type="entry name" value="Biotin synthase"/>
    <property type="match status" value="1"/>
</dbReference>
<dbReference type="Gene3D" id="3.20.20.70">
    <property type="entry name" value="Aldolase class I"/>
    <property type="match status" value="1"/>
</dbReference>
<dbReference type="HAMAP" id="MF_01694">
    <property type="entry name" value="BioB"/>
    <property type="match status" value="1"/>
</dbReference>
<dbReference type="InterPro" id="IPR013785">
    <property type="entry name" value="Aldolase_TIM"/>
</dbReference>
<dbReference type="InterPro" id="IPR010722">
    <property type="entry name" value="BATS_dom"/>
</dbReference>
<dbReference type="InterPro" id="IPR002684">
    <property type="entry name" value="Biotin_synth/BioAB"/>
</dbReference>
<dbReference type="InterPro" id="IPR006638">
    <property type="entry name" value="Elp3/MiaA/NifB-like_rSAM"/>
</dbReference>
<dbReference type="InterPro" id="IPR007197">
    <property type="entry name" value="rSAM"/>
</dbReference>
<dbReference type="NCBIfam" id="TIGR00433">
    <property type="entry name" value="bioB"/>
    <property type="match status" value="1"/>
</dbReference>
<dbReference type="PANTHER" id="PTHR22976">
    <property type="entry name" value="BIOTIN SYNTHASE"/>
    <property type="match status" value="1"/>
</dbReference>
<dbReference type="PANTHER" id="PTHR22976:SF2">
    <property type="entry name" value="BIOTIN SYNTHASE, MITOCHONDRIAL"/>
    <property type="match status" value="1"/>
</dbReference>
<dbReference type="Pfam" id="PF06968">
    <property type="entry name" value="BATS"/>
    <property type="match status" value="1"/>
</dbReference>
<dbReference type="Pfam" id="PF04055">
    <property type="entry name" value="Radical_SAM"/>
    <property type="match status" value="1"/>
</dbReference>
<dbReference type="SFLD" id="SFLDG01278">
    <property type="entry name" value="biotin_synthase_like"/>
    <property type="match status" value="1"/>
</dbReference>
<dbReference type="SFLD" id="SFLDS00029">
    <property type="entry name" value="Radical_SAM"/>
    <property type="match status" value="1"/>
</dbReference>
<dbReference type="SMART" id="SM00876">
    <property type="entry name" value="BATS"/>
    <property type="match status" value="1"/>
</dbReference>
<dbReference type="SMART" id="SM00729">
    <property type="entry name" value="Elp3"/>
    <property type="match status" value="1"/>
</dbReference>
<dbReference type="SUPFAM" id="SSF102114">
    <property type="entry name" value="Radical SAM enzymes"/>
    <property type="match status" value="1"/>
</dbReference>
<dbReference type="PROSITE" id="PS51918">
    <property type="entry name" value="RADICAL_SAM"/>
    <property type="match status" value="1"/>
</dbReference>